<organismHost>
    <name type="scientific">Homo sapiens</name>
    <name type="common">Human</name>
    <dbReference type="NCBI Taxonomy" id="9606"/>
</organismHost>
<evidence type="ECO:0000250" key="1"/>
<evidence type="ECO:0000255" key="2"/>
<evidence type="ECO:0000256" key="3">
    <source>
        <dbReference type="SAM" id="MobiDB-lite"/>
    </source>
</evidence>
<evidence type="ECO:0000305" key="4"/>
<organism>
    <name type="scientific">Human herpesvirus 2 (strain HG52)</name>
    <name type="common">HHV-2</name>
    <name type="synonym">Human herpes simplex virus 2</name>
    <dbReference type="NCBI Taxonomy" id="10315"/>
    <lineage>
        <taxon>Viruses</taxon>
        <taxon>Duplodnaviria</taxon>
        <taxon>Heunggongvirae</taxon>
        <taxon>Peploviricota</taxon>
        <taxon>Herviviricetes</taxon>
        <taxon>Herpesvirales</taxon>
        <taxon>Orthoherpesviridae</taxon>
        <taxon>Alphaherpesvirinae</taxon>
        <taxon>Simplexvirus</taxon>
        <taxon>Simplexvirus humanalpha2</taxon>
        <taxon>Human herpesvirus 2</taxon>
    </lineage>
</organism>
<gene>
    <name type="primary">US10</name>
</gene>
<feature type="chain" id="PRO_0000406188" description="Virion protein US10">
    <location>
        <begin position="1"/>
        <end position="302"/>
    </location>
</feature>
<feature type="zinc finger region" evidence="2">
    <location>
        <begin position="255"/>
        <end position="267"/>
    </location>
</feature>
<feature type="region of interest" description="Disordered" evidence="3">
    <location>
        <begin position="1"/>
        <end position="155"/>
    </location>
</feature>
<feature type="compositionally biased region" description="Basic and acidic residues" evidence="3">
    <location>
        <begin position="27"/>
        <end position="36"/>
    </location>
</feature>
<feature type="compositionally biased region" description="Low complexity" evidence="3">
    <location>
        <begin position="40"/>
        <end position="50"/>
    </location>
</feature>
<feature type="compositionally biased region" description="Basic residues" evidence="3">
    <location>
        <begin position="135"/>
        <end position="144"/>
    </location>
</feature>
<dbReference type="EMBL" id="Z86099">
    <property type="protein sequence ID" value="CAB06718.1"/>
    <property type="molecule type" value="Genomic_DNA"/>
</dbReference>
<dbReference type="DNASU" id="1487351"/>
<dbReference type="KEGG" id="vg:1487351"/>
<dbReference type="Proteomes" id="UP000001874">
    <property type="component" value="Segment"/>
</dbReference>
<dbReference type="GO" id="GO:0044204">
    <property type="term" value="C:host cell nuclear matrix"/>
    <property type="evidence" value="ECO:0007669"/>
    <property type="project" value="UniProtKB-SubCell"/>
</dbReference>
<dbReference type="GO" id="GO:0019033">
    <property type="term" value="C:viral tegument"/>
    <property type="evidence" value="ECO:0007669"/>
    <property type="project" value="UniProtKB-SubCell"/>
</dbReference>
<dbReference type="GO" id="GO:0008270">
    <property type="term" value="F:zinc ion binding"/>
    <property type="evidence" value="ECO:0007669"/>
    <property type="project" value="UniProtKB-KW"/>
</dbReference>
<dbReference type="InterPro" id="IPR000714">
    <property type="entry name" value="EHV_Unk"/>
</dbReference>
<dbReference type="Pfam" id="PF02053">
    <property type="entry name" value="Gene66"/>
    <property type="match status" value="1"/>
</dbReference>
<dbReference type="PRINTS" id="PR00957">
    <property type="entry name" value="GENE66"/>
</dbReference>
<accession>P89478</accession>
<keyword id="KW-1048">Host nucleus</keyword>
<keyword id="KW-0426">Late protein</keyword>
<keyword id="KW-0479">Metal-binding</keyword>
<keyword id="KW-1185">Reference proteome</keyword>
<keyword id="KW-0946">Virion</keyword>
<keyword id="KW-0920">Virion tegument</keyword>
<keyword id="KW-0862">Zinc</keyword>
<keyword id="KW-0863">Zinc-finger</keyword>
<sequence length="302" mass="33150">MIRRRGNVEIRVYYESVRPSRSRSHLKPSDHQEFPGHHVSPGSPGFPESPGNREFHDLPENPGSRAYPGTRDPHDPHGCPGSLDPHGNPAQPAGLPSPVPYAPLGSPDPSSPRQRTYVLPRVGIHNAPASDTRAPKRANSRHRADRPPESPGSELYPLNAQALAHLQMLPADHRAFFRTVIEVSRLCALNTHDPPPPLAGARVGQEAQLVHTQWLRANRESSPLWPWRTAAMNFIAAAAPCVQTHRHMHDLLMACAFWCCLAHASTCSYAGLYSAHCQHLFRAFGCGPPVLTTSRGQGGWCN</sequence>
<comment type="subcellular location">
    <subcellularLocation>
        <location>Virion tegument</location>
    </subcellularLocation>
    <subcellularLocation>
        <location evidence="1">Host nucleus matrix</location>
    </subcellularLocation>
</comment>
<comment type="induction">
    <text>Expressed late in the infection cycle.</text>
</comment>
<comment type="PTM">
    <text evidence="1">Phosphorylated.</text>
</comment>
<comment type="similarity">
    <text evidence="4">Belongs to the herpesviridae US10 family.</text>
</comment>
<proteinExistence type="evidence at transcript level"/>
<name>US10_HHV2H</name>
<protein>
    <recommendedName>
        <fullName>Virion protein US10</fullName>
    </recommendedName>
</protein>
<reference key="1">
    <citation type="journal article" date="1991" name="J. Gen. Virol.">
        <title>Comparative sequence analysis of the long repeat regions and adjoining parts of the long unique regions in the genomes of herpes simplex viruses types 1 and 2.</title>
        <authorList>
            <person name="McGeoch D.J."/>
            <person name="Cunningham C."/>
            <person name="McIntyre G."/>
            <person name="Dolan A."/>
        </authorList>
    </citation>
    <scope>NUCLEOTIDE SEQUENCE [LARGE SCALE GENOMIC DNA]</scope>
</reference>